<proteinExistence type="evidence at protein level"/>
<name>ULT1_ARATH</name>
<sequence length="237" mass="26744">MANNEGEMQCGSMLFKQEELQEMSGVNVGGDYVEVMCGCTSHRYGDAVARLRVFPTGDLEITCECTPGCDEDKLTPAAFEKHSGRETARKWKNNVWVIIGGEKVPLSKTVLLKYYNESSKKCSRSNRSQGAKVCHRDEFVGCNDCGKERRFRLRSRDECRLHHNAMGDPNWKCSDFPYDKITCEEEEERGSRKVYRGCTRSPSCKGCTSCVCFGCELCRFSECTCQTCVDFTSNVKA</sequence>
<evidence type="ECO:0000255" key="1">
    <source>
        <dbReference type="PROSITE-ProRule" id="PRU00185"/>
    </source>
</evidence>
<evidence type="ECO:0000255" key="2">
    <source>
        <dbReference type="PROSITE-ProRule" id="PRU00454"/>
    </source>
</evidence>
<evidence type="ECO:0000269" key="3">
    <source>
    </source>
</evidence>
<evidence type="ECO:0000269" key="4">
    <source>
    </source>
</evidence>
<evidence type="ECO:0000269" key="5">
    <source>
    </source>
</evidence>
<evidence type="ECO:0000269" key="6">
    <source>
    </source>
</evidence>
<evidence type="ECO:0000269" key="7">
    <source>
    </source>
</evidence>
<evidence type="ECO:0000303" key="8">
    <source>
    </source>
</evidence>
<evidence type="ECO:0000305" key="9"/>
<evidence type="ECO:0000312" key="10">
    <source>
        <dbReference type="Araport" id="AT4G28190"/>
    </source>
</evidence>
<evidence type="ECO:0000312" key="11">
    <source>
        <dbReference type="EMBL" id="CAB79621.1"/>
    </source>
</evidence>
<dbReference type="EMBL" id="AL161572">
    <property type="protein sequence ID" value="CAB79621.1"/>
    <property type="status" value="ALT_SEQ"/>
    <property type="molecule type" value="Genomic_DNA"/>
</dbReference>
<dbReference type="EMBL" id="CP002687">
    <property type="protein sequence ID" value="AEE85451.1"/>
    <property type="molecule type" value="Genomic_DNA"/>
</dbReference>
<dbReference type="EMBL" id="AK117106">
    <property type="protein sequence ID" value="BAC41785.1"/>
    <property type="molecule type" value="mRNA"/>
</dbReference>
<dbReference type="EMBL" id="AY088835">
    <property type="protein sequence ID" value="AAM67142.1"/>
    <property type="status" value="ALT_INIT"/>
    <property type="molecule type" value="mRNA"/>
</dbReference>
<dbReference type="PIR" id="T09035">
    <property type="entry name" value="T09035"/>
</dbReference>
<dbReference type="RefSeq" id="NP_567799.1">
    <molecule id="Q8GZA8-1"/>
    <property type="nucleotide sequence ID" value="NM_118959.5"/>
</dbReference>
<dbReference type="BioGRID" id="14221">
    <property type="interactions" value="10"/>
</dbReference>
<dbReference type="FunCoup" id="Q8GZA8">
    <property type="interactions" value="68"/>
</dbReference>
<dbReference type="IntAct" id="Q8GZA8">
    <property type="interactions" value="6"/>
</dbReference>
<dbReference type="STRING" id="3702.Q8GZA8"/>
<dbReference type="ProteomicsDB" id="245311">
    <molecule id="Q8GZA8-1"/>
</dbReference>
<dbReference type="EnsemblPlants" id="AT4G28190.1">
    <molecule id="Q8GZA8-1"/>
    <property type="protein sequence ID" value="AT4G28190.1"/>
    <property type="gene ID" value="AT4G28190"/>
</dbReference>
<dbReference type="GeneID" id="828934"/>
<dbReference type="Gramene" id="AT4G28190.1">
    <molecule id="Q8GZA8-1"/>
    <property type="protein sequence ID" value="AT4G28190.1"/>
    <property type="gene ID" value="AT4G28190"/>
</dbReference>
<dbReference type="KEGG" id="ath:AT4G28190"/>
<dbReference type="Araport" id="AT4G28190"/>
<dbReference type="TAIR" id="AT4G28190">
    <property type="gene designation" value="ULT1"/>
</dbReference>
<dbReference type="HOGENOM" id="CLU_100373_0_0_1"/>
<dbReference type="InParanoid" id="Q8GZA8"/>
<dbReference type="OrthoDB" id="660341at2759"/>
<dbReference type="PhylomeDB" id="Q8GZA8"/>
<dbReference type="PRO" id="PR:Q8GZA8"/>
<dbReference type="Proteomes" id="UP000006548">
    <property type="component" value="Chromosome 4"/>
</dbReference>
<dbReference type="ExpressionAtlas" id="Q8GZA8">
    <property type="expression patterns" value="baseline and differential"/>
</dbReference>
<dbReference type="GO" id="GO:0005737">
    <property type="term" value="C:cytoplasm"/>
    <property type="evidence" value="ECO:0007669"/>
    <property type="project" value="UniProtKB-SubCell"/>
</dbReference>
<dbReference type="GO" id="GO:0005634">
    <property type="term" value="C:nucleus"/>
    <property type="evidence" value="ECO:0007669"/>
    <property type="project" value="UniProtKB-SubCell"/>
</dbReference>
<dbReference type="GO" id="GO:0003677">
    <property type="term" value="F:DNA binding"/>
    <property type="evidence" value="ECO:0007669"/>
    <property type="project" value="UniProtKB-KW"/>
</dbReference>
<dbReference type="GO" id="GO:0008270">
    <property type="term" value="F:zinc ion binding"/>
    <property type="evidence" value="ECO:0007669"/>
    <property type="project" value="UniProtKB-KW"/>
</dbReference>
<dbReference type="GO" id="GO:0040029">
    <property type="term" value="P:epigenetic regulation of gene expression"/>
    <property type="evidence" value="ECO:0000315"/>
    <property type="project" value="UniProtKB"/>
</dbReference>
<dbReference type="GO" id="GO:0009910">
    <property type="term" value="P:negative regulation of flower development"/>
    <property type="evidence" value="ECO:0000315"/>
    <property type="project" value="UniProtKB"/>
</dbReference>
<dbReference type="GO" id="GO:0009909">
    <property type="term" value="P:regulation of flower development"/>
    <property type="evidence" value="ECO:0000315"/>
    <property type="project" value="UniProtKB"/>
</dbReference>
<dbReference type="GO" id="GO:1901000">
    <property type="term" value="P:regulation of response to salt stress"/>
    <property type="evidence" value="ECO:0000315"/>
    <property type="project" value="UniProtKB"/>
</dbReference>
<dbReference type="Gene3D" id="3.10.390.10">
    <property type="entry name" value="SAND domain-like"/>
    <property type="match status" value="1"/>
</dbReference>
<dbReference type="InterPro" id="IPR020533">
    <property type="entry name" value="Developmental_reg_ULTRAPETALA"/>
</dbReference>
<dbReference type="InterPro" id="IPR010919">
    <property type="entry name" value="SAND-like_dom_sf"/>
</dbReference>
<dbReference type="InterPro" id="IPR000770">
    <property type="entry name" value="SAND_dom"/>
</dbReference>
<dbReference type="InterPro" id="IPR057011">
    <property type="entry name" value="ULT1/2_SAND"/>
</dbReference>
<dbReference type="InterPro" id="IPR057012">
    <property type="entry name" value="ULT1/2_Znf"/>
</dbReference>
<dbReference type="PANTHER" id="PTHR34053">
    <property type="entry name" value="PROTEIN ULTRAPETALA 1"/>
    <property type="match status" value="1"/>
</dbReference>
<dbReference type="PANTHER" id="PTHR34053:SF1">
    <property type="entry name" value="PROTEIN ULTRAPETALA 1"/>
    <property type="match status" value="1"/>
</dbReference>
<dbReference type="Pfam" id="PF23292">
    <property type="entry name" value="SAND_ULT1"/>
    <property type="match status" value="1"/>
</dbReference>
<dbReference type="Pfam" id="PF23293">
    <property type="entry name" value="zf_ULT1"/>
    <property type="match status" value="1"/>
</dbReference>
<dbReference type="PROSITE" id="PS50864">
    <property type="entry name" value="SAND"/>
    <property type="match status" value="1"/>
</dbReference>
<organism>
    <name type="scientific">Arabidopsis thaliana</name>
    <name type="common">Mouse-ear cress</name>
    <dbReference type="NCBI Taxonomy" id="3702"/>
    <lineage>
        <taxon>Eukaryota</taxon>
        <taxon>Viridiplantae</taxon>
        <taxon>Streptophyta</taxon>
        <taxon>Embryophyta</taxon>
        <taxon>Tracheophyta</taxon>
        <taxon>Spermatophyta</taxon>
        <taxon>Magnoliopsida</taxon>
        <taxon>eudicotyledons</taxon>
        <taxon>Gunneridae</taxon>
        <taxon>Pentapetalae</taxon>
        <taxon>rosids</taxon>
        <taxon>malvids</taxon>
        <taxon>Brassicales</taxon>
        <taxon>Brassicaceae</taxon>
        <taxon>Camelineae</taxon>
        <taxon>Arabidopsis</taxon>
    </lineage>
</organism>
<gene>
    <name evidence="8" type="primary">ULT1</name>
    <name evidence="10" type="ordered locus">At4g28190</name>
    <name evidence="11" type="ORF">F26K10.70</name>
</gene>
<accession>Q8GZA8</accession>
<accession>Q8L8S8</accession>
<accession>Q9M0I8</accession>
<reference key="1">
    <citation type="journal article" date="2005" name="Development">
        <title>ULTRAPETALA1 encodes a SAND domain putative transcriptional regulator that controls shoot and floral meristem activity in Arabidopsis.</title>
        <authorList>
            <person name="Carles C.C."/>
            <person name="Choffnes-Inada D."/>
            <person name="Reville K."/>
            <person name="Lertpiriyapong K."/>
            <person name="Fletcher J.C."/>
        </authorList>
    </citation>
    <scope>NUCLEOTIDE SEQUENCE [MRNA]</scope>
    <scope>FUNCTION</scope>
    <scope>SUBCELLULAR LOCATION</scope>
    <scope>TISSUE SPECIFICITY</scope>
    <scope>DEVELOPMENTAL STAGE</scope>
    <scope>MUTAGENESIS OF SER-83 AND CYS-173</scope>
    <source>
        <strain>cv. Landsberg erecta</strain>
    </source>
</reference>
<reference key="2">
    <citation type="journal article" date="1999" name="Nature">
        <title>Sequence and analysis of chromosome 4 of the plant Arabidopsis thaliana.</title>
        <authorList>
            <person name="Mayer K.F.X."/>
            <person name="Schueller C."/>
            <person name="Wambutt R."/>
            <person name="Murphy G."/>
            <person name="Volckaert G."/>
            <person name="Pohl T."/>
            <person name="Duesterhoeft A."/>
            <person name="Stiekema W."/>
            <person name="Entian K.-D."/>
            <person name="Terryn N."/>
            <person name="Harris B."/>
            <person name="Ansorge W."/>
            <person name="Brandt P."/>
            <person name="Grivell L.A."/>
            <person name="Rieger M."/>
            <person name="Weichselgartner M."/>
            <person name="de Simone V."/>
            <person name="Obermaier B."/>
            <person name="Mache R."/>
            <person name="Mueller M."/>
            <person name="Kreis M."/>
            <person name="Delseny M."/>
            <person name="Puigdomenech P."/>
            <person name="Watson M."/>
            <person name="Schmidtheini T."/>
            <person name="Reichert B."/>
            <person name="Portetelle D."/>
            <person name="Perez-Alonso M."/>
            <person name="Boutry M."/>
            <person name="Bancroft I."/>
            <person name="Vos P."/>
            <person name="Hoheisel J."/>
            <person name="Zimmermann W."/>
            <person name="Wedler H."/>
            <person name="Ridley P."/>
            <person name="Langham S.-A."/>
            <person name="McCullagh B."/>
            <person name="Bilham L."/>
            <person name="Robben J."/>
            <person name="van der Schueren J."/>
            <person name="Grymonprez B."/>
            <person name="Chuang Y.-J."/>
            <person name="Vandenbussche F."/>
            <person name="Braeken M."/>
            <person name="Weltjens I."/>
            <person name="Voet M."/>
            <person name="Bastiaens I."/>
            <person name="Aert R."/>
            <person name="Defoor E."/>
            <person name="Weitzenegger T."/>
            <person name="Bothe G."/>
            <person name="Ramsperger U."/>
            <person name="Hilbert H."/>
            <person name="Braun M."/>
            <person name="Holzer E."/>
            <person name="Brandt A."/>
            <person name="Peters S."/>
            <person name="van Staveren M."/>
            <person name="Dirkse W."/>
            <person name="Mooijman P."/>
            <person name="Klein Lankhorst R."/>
            <person name="Rose M."/>
            <person name="Hauf J."/>
            <person name="Koetter P."/>
            <person name="Berneiser S."/>
            <person name="Hempel S."/>
            <person name="Feldpausch M."/>
            <person name="Lamberth S."/>
            <person name="Van den Daele H."/>
            <person name="De Keyser A."/>
            <person name="Buysshaert C."/>
            <person name="Gielen J."/>
            <person name="Villarroel R."/>
            <person name="De Clercq R."/>
            <person name="van Montagu M."/>
            <person name="Rogers J."/>
            <person name="Cronin A."/>
            <person name="Quail M.A."/>
            <person name="Bray-Allen S."/>
            <person name="Clark L."/>
            <person name="Doggett J."/>
            <person name="Hall S."/>
            <person name="Kay M."/>
            <person name="Lennard N."/>
            <person name="McLay K."/>
            <person name="Mayes R."/>
            <person name="Pettett A."/>
            <person name="Rajandream M.A."/>
            <person name="Lyne M."/>
            <person name="Benes V."/>
            <person name="Rechmann S."/>
            <person name="Borkova D."/>
            <person name="Bloecker H."/>
            <person name="Scharfe M."/>
            <person name="Grimm M."/>
            <person name="Loehnert T.-H."/>
            <person name="Dose S."/>
            <person name="de Haan M."/>
            <person name="Maarse A.C."/>
            <person name="Schaefer M."/>
            <person name="Mueller-Auer S."/>
            <person name="Gabel C."/>
            <person name="Fuchs M."/>
            <person name="Fartmann B."/>
            <person name="Granderath K."/>
            <person name="Dauner D."/>
            <person name="Herzl A."/>
            <person name="Neumann S."/>
            <person name="Argiriou A."/>
            <person name="Vitale D."/>
            <person name="Liguori R."/>
            <person name="Piravandi E."/>
            <person name="Massenet O."/>
            <person name="Quigley F."/>
            <person name="Clabauld G."/>
            <person name="Muendlein A."/>
            <person name="Felber R."/>
            <person name="Schnabl S."/>
            <person name="Hiller R."/>
            <person name="Schmidt W."/>
            <person name="Lecharny A."/>
            <person name="Aubourg S."/>
            <person name="Chefdor F."/>
            <person name="Cooke R."/>
            <person name="Berger C."/>
            <person name="Monfort A."/>
            <person name="Casacuberta E."/>
            <person name="Gibbons T."/>
            <person name="Weber N."/>
            <person name="Vandenbol M."/>
            <person name="Bargues M."/>
            <person name="Terol J."/>
            <person name="Torres A."/>
            <person name="Perez-Perez A."/>
            <person name="Purnelle B."/>
            <person name="Bent E."/>
            <person name="Johnson S."/>
            <person name="Tacon D."/>
            <person name="Jesse T."/>
            <person name="Heijnen L."/>
            <person name="Schwarz S."/>
            <person name="Scholler P."/>
            <person name="Heber S."/>
            <person name="Francs P."/>
            <person name="Bielke C."/>
            <person name="Frishman D."/>
            <person name="Haase D."/>
            <person name="Lemcke K."/>
            <person name="Mewes H.-W."/>
            <person name="Stocker S."/>
            <person name="Zaccaria P."/>
            <person name="Bevan M."/>
            <person name="Wilson R.K."/>
            <person name="de la Bastide M."/>
            <person name="Habermann K."/>
            <person name="Parnell L."/>
            <person name="Dedhia N."/>
            <person name="Gnoj L."/>
            <person name="Schutz K."/>
            <person name="Huang E."/>
            <person name="Spiegel L."/>
            <person name="Sekhon M."/>
            <person name="Murray J."/>
            <person name="Sheet P."/>
            <person name="Cordes M."/>
            <person name="Abu-Threideh J."/>
            <person name="Stoneking T."/>
            <person name="Kalicki J."/>
            <person name="Graves T."/>
            <person name="Harmon G."/>
            <person name="Edwards J."/>
            <person name="Latreille P."/>
            <person name="Courtney L."/>
            <person name="Cloud J."/>
            <person name="Abbott A."/>
            <person name="Scott K."/>
            <person name="Johnson D."/>
            <person name="Minx P."/>
            <person name="Bentley D."/>
            <person name="Fulton B."/>
            <person name="Miller N."/>
            <person name="Greco T."/>
            <person name="Kemp K."/>
            <person name="Kramer J."/>
            <person name="Fulton L."/>
            <person name="Mardis E."/>
            <person name="Dante M."/>
            <person name="Pepin K."/>
            <person name="Hillier L.W."/>
            <person name="Nelson J."/>
            <person name="Spieth J."/>
            <person name="Ryan E."/>
            <person name="Andrews S."/>
            <person name="Geisel C."/>
            <person name="Layman D."/>
            <person name="Du H."/>
            <person name="Ali J."/>
            <person name="Berghoff A."/>
            <person name="Jones K."/>
            <person name="Drone K."/>
            <person name="Cotton M."/>
            <person name="Joshu C."/>
            <person name="Antonoiu B."/>
            <person name="Zidanic M."/>
            <person name="Strong C."/>
            <person name="Sun H."/>
            <person name="Lamar B."/>
            <person name="Yordan C."/>
            <person name="Ma P."/>
            <person name="Zhong J."/>
            <person name="Preston R."/>
            <person name="Vil D."/>
            <person name="Shekher M."/>
            <person name="Matero A."/>
            <person name="Shah R."/>
            <person name="Swaby I.K."/>
            <person name="O'Shaughnessy A."/>
            <person name="Rodriguez M."/>
            <person name="Hoffman J."/>
            <person name="Till S."/>
            <person name="Granat S."/>
            <person name="Shohdy N."/>
            <person name="Hasegawa A."/>
            <person name="Hameed A."/>
            <person name="Lodhi M."/>
            <person name="Johnson A."/>
            <person name="Chen E."/>
            <person name="Marra M.A."/>
            <person name="Martienssen R."/>
            <person name="McCombie W.R."/>
        </authorList>
    </citation>
    <scope>NUCLEOTIDE SEQUENCE [LARGE SCALE GENOMIC DNA]</scope>
    <source>
        <strain>cv. Columbia</strain>
    </source>
</reference>
<reference key="3">
    <citation type="journal article" date="2017" name="Plant J.">
        <title>Araport11: a complete reannotation of the Arabidopsis thaliana reference genome.</title>
        <authorList>
            <person name="Cheng C.Y."/>
            <person name="Krishnakumar V."/>
            <person name="Chan A.P."/>
            <person name="Thibaud-Nissen F."/>
            <person name="Schobel S."/>
            <person name="Town C.D."/>
        </authorList>
    </citation>
    <scope>GENOME REANNOTATION</scope>
    <source>
        <strain>cv. Columbia</strain>
    </source>
</reference>
<reference key="4">
    <citation type="journal article" date="2002" name="Science">
        <title>Functional annotation of a full-length Arabidopsis cDNA collection.</title>
        <authorList>
            <person name="Seki M."/>
            <person name="Narusaka M."/>
            <person name="Kamiya A."/>
            <person name="Ishida J."/>
            <person name="Satou M."/>
            <person name="Sakurai T."/>
            <person name="Nakajima M."/>
            <person name="Enju A."/>
            <person name="Akiyama K."/>
            <person name="Oono Y."/>
            <person name="Muramatsu M."/>
            <person name="Hayashizaki Y."/>
            <person name="Kawai J."/>
            <person name="Carninci P."/>
            <person name="Itoh M."/>
            <person name="Ishii Y."/>
            <person name="Arakawa T."/>
            <person name="Shibata K."/>
            <person name="Shinagawa A."/>
            <person name="Shinozaki K."/>
        </authorList>
    </citation>
    <scope>NUCLEOTIDE SEQUENCE [LARGE SCALE MRNA]</scope>
    <source>
        <strain>cv. Columbia</strain>
    </source>
</reference>
<reference key="5">
    <citation type="submission" date="2002-03" db="EMBL/GenBank/DDBJ databases">
        <title>Full-length cDNA from Arabidopsis thaliana.</title>
        <authorList>
            <person name="Brover V.V."/>
            <person name="Troukhan M.E."/>
            <person name="Alexandrov N.A."/>
            <person name="Lu Y.-P."/>
            <person name="Flavell R.B."/>
            <person name="Feldmann K.A."/>
        </authorList>
    </citation>
    <scope>NUCLEOTIDE SEQUENCE [LARGE SCALE MRNA]</scope>
</reference>
<reference key="6">
    <citation type="journal article" date="2004" name="Genetics">
        <title>The ULTRAPETALA1 gene functions early in Arabidopsis development to restrict shoot apical meristem activity and acts through WUSCHEL to regulate floral meristem determinacy.</title>
        <authorList>
            <person name="Carles C.C."/>
            <person name="Lertpiriyapong K."/>
            <person name="Reville K."/>
            <person name="Fletcher J.C."/>
        </authorList>
    </citation>
    <scope>FUNCTION</scope>
    <scope>IDENTIFICATION</scope>
</reference>
<reference key="7">
    <citation type="journal article" date="2008" name="Plant Cell">
        <title>REBELOTE, SQUINT, and ULTRAPETALA1 function redundantly in the temporal regulation of floral meristem termination in Arabidopsis thaliana.</title>
        <authorList>
            <person name="Prunet N."/>
            <person name="Morel P."/>
            <person name="Thierry A.-M."/>
            <person name="Eshed Y."/>
            <person name="Bowman J.L."/>
            <person name="Negrutiu I."/>
            <person name="Trehin C."/>
        </authorList>
    </citation>
    <scope>FUNCTION</scope>
    <scope>DISRUPTION PHENOTYPE</scope>
    <scope>TISSUE SPECIFICITY</scope>
</reference>
<reference key="8">
    <citation type="journal article" date="2013" name="Plant Physiol.">
        <title>EMBRYONIC FLOWER1 and ULTRAPETALA1 Act Antagonistically on Arabidopsis Development and Stress Response.</title>
        <authorList>
            <person name="Pu L."/>
            <person name="Liu M.-S."/>
            <person name="Kim S.Y."/>
            <person name="Chen L.-F.O."/>
            <person name="Fletcher J.C."/>
            <person name="Sung Z.R."/>
        </authorList>
    </citation>
    <scope>FUNCTION</scope>
    <scope>DISRUPTION PHENOTYPE</scope>
    <scope>INTERACTION WITH ATX1</scope>
    <source>
        <strain>cv. Columbia</strain>
    </source>
</reference>
<reference key="9">
    <citation type="journal article" date="2016" name="Development">
        <title>The Myb-domain protein ULTRAPETALA1 INTERACTING FACTOR 1 controls floral meristem activities in Arabidopsis.</title>
        <authorList>
            <person name="Moreau F."/>
            <person name="Thevenon E."/>
            <person name="Blanvillain R."/>
            <person name="Lopez-Vidriero I."/>
            <person name="Franco-Zorrilla J.M."/>
            <person name="Dumas R."/>
            <person name="Parcy F."/>
            <person name="Morel P."/>
            <person name="Trehin C."/>
            <person name="Carles C.C."/>
        </authorList>
    </citation>
    <scope>INTERACTION WITH HHO5</scope>
</reference>
<feature type="chain" id="PRO_0000074103" description="Protein ULTRAPETALA 1">
    <location>
        <begin position="1"/>
        <end position="237"/>
    </location>
</feature>
<feature type="domain" description="SAND" evidence="1">
    <location>
        <begin position="18"/>
        <end position="116"/>
    </location>
</feature>
<feature type="zinc finger region" description="CW-type" evidence="2">
    <location>
        <begin position="133"/>
        <end position="191"/>
    </location>
</feature>
<feature type="mutagenesis site" description="In ult1-1; induces enlargement of inflorescence and floral meristems, production of supernumerary flowers and floral organs, and a delay in floral meristem termination." evidence="4">
    <original>S</original>
    <variation>F</variation>
    <location>
        <position position="83"/>
    </location>
</feature>
<feature type="mutagenesis site" description="In ult1-1; semi-dominant allele that induces enlargement of inflorescence and floral meristems, production of supernumerary flowers and floral organs, and a delay in floral meristem termination." evidence="4">
    <original>C</original>
    <variation>T</variation>
    <location>
        <position position="173"/>
    </location>
</feature>
<feature type="sequence conflict" description="In Ref. 5; AAM67142." evidence="9" ref="5">
    <original>K</original>
    <variation>N</variation>
    <location>
        <position position="103"/>
    </location>
</feature>
<comment type="function">
    <text evidence="3 4 5 6">Putative transcription factor that acts as a key negative regulator of cell accumulation in shoot and floral meristems. Negatively regulates the size of the WUSCHEL (WUS)-expressing organizing center in inflorescence meristems. May act by down-regulating expression of WUS. Acts as an antirepressor that counteracts EMF1 action through modulation of trimethylated 'Lys-4' on histone H3 (H3K4me3) marks on target gene loci (including genes involved in salt stress response and flower development) (PubMed:23632855). Collaboratively with RBL and CYP40/SQN, influences floral meristem (FM) determinacy in an AGAMOUS and SUPERMAN-dependent manner, thus contributing to the floral developmental homeostasis (PubMed:18441215).</text>
</comment>
<comment type="subunit">
    <text evidence="6 7">Interacts with HHO5 (PubMed:26903506). Associates with ATX1 for trimethylating 'Lys-4' on histone H3 (H3K4me3) at flower MADS box gene loci (PubMed:23632855).</text>
</comment>
<comment type="subcellular location">
    <subcellularLocation>
        <location evidence="4">Cytoplasm</location>
    </subcellularLocation>
    <subcellularLocation>
        <location evidence="1 4">Nucleus</location>
    </subcellularLocation>
</comment>
<comment type="alternative products">
    <event type="alternative splicing"/>
    <isoform>
        <id>Q8GZA8-1</id>
        <name>1</name>
        <sequence type="displayed"/>
    </isoform>
    <text>A number of isoforms are produced. According to EST sequences.</text>
</comment>
<comment type="tissue specificity">
    <text evidence="4 5">Expressed at low levels in seedlings, roots, shoots, leaves, stems, inflorescences, pollen, flowers and siliques, with highest levels dividing tissues including inflorescence.</text>
</comment>
<comment type="developmental stage">
    <text evidence="4">Expressed in embryonic shoot apical meristems, in inflorescence and floral meristems, and in developing stamens, carpels and ovules. Also expressed in vegetative meristems and leaf primordia.</text>
</comment>
<comment type="disruption phenotype">
    <text evidence="5 6">Delayed flowering and higher floral organs number with extra petals and sepals (PubMed:23632855). Increased H3K27me3 marks but decreased H3K4me3 marks on target gene loci (PubMed:23632855). Plants missing both EMF1 and ULT1 have rescued normal H3K27me3 marks and H3K4me3 marks (PubMed:23632855). Plants lacking both CRC and ULT1 exhibit strong floral meristem (FM) indeterminacy with reiterations of extra floral whorls in the center of the flower associated with reduced AGAMOUS and SUPERMAN levels (PubMed:18441215).</text>
</comment>
<comment type="caution">
    <text evidence="9">It is uncertain whether Met-1 or Met-8 is the initiator.</text>
</comment>
<comment type="sequence caution" evidence="9">
    <conflict type="erroneous initiation">
        <sequence resource="EMBL-CDS" id="AAM67142"/>
    </conflict>
    <text>Truncated N-terminus.</text>
</comment>
<comment type="sequence caution" evidence="9">
    <conflict type="erroneous gene model prediction">
        <sequence resource="EMBL-CDS" id="CAB79621"/>
    </conflict>
</comment>
<protein>
    <recommendedName>
        <fullName evidence="8">Protein ULTRAPETALA 1</fullName>
    </recommendedName>
</protein>
<keyword id="KW-0025">Alternative splicing</keyword>
<keyword id="KW-0963">Cytoplasm</keyword>
<keyword id="KW-0217">Developmental protein</keyword>
<keyword id="KW-0238">DNA-binding</keyword>
<keyword id="KW-0479">Metal-binding</keyword>
<keyword id="KW-0539">Nucleus</keyword>
<keyword id="KW-1185">Reference proteome</keyword>
<keyword id="KW-0804">Transcription</keyword>
<keyword id="KW-0805">Transcription regulation</keyword>
<keyword id="KW-0862">Zinc</keyword>
<keyword id="KW-0863">Zinc-finger</keyword>